<protein>
    <recommendedName>
        <fullName>Actin-97</fullName>
        <ecNumber evidence="1">3.6.4.-</ecNumber>
    </recommendedName>
</protein>
<keyword id="KW-0067">ATP-binding</keyword>
<keyword id="KW-0963">Cytoplasm</keyword>
<keyword id="KW-0206">Cytoskeleton</keyword>
<keyword id="KW-0378">Hydrolase</keyword>
<keyword id="KW-0547">Nucleotide-binding</keyword>
<keyword id="KW-1185">Reference proteome</keyword>
<comment type="function">
    <text>Actins are highly conserved proteins that are involved in various types of cell motility and are ubiquitously expressed in all eukaryotic cells. Essential component of cell cytoskeleton; plays an important role in cytoplasmic streaming, cell shape determination, cell division, organelle movement and extension growth.</text>
</comment>
<comment type="catalytic activity">
    <reaction evidence="1">
        <text>ATP + H2O = ADP + phosphate + H(+)</text>
        <dbReference type="Rhea" id="RHEA:13065"/>
        <dbReference type="ChEBI" id="CHEBI:15377"/>
        <dbReference type="ChEBI" id="CHEBI:15378"/>
        <dbReference type="ChEBI" id="CHEBI:30616"/>
        <dbReference type="ChEBI" id="CHEBI:43474"/>
        <dbReference type="ChEBI" id="CHEBI:456216"/>
    </reaction>
</comment>
<comment type="subcellular location">
    <subcellularLocation>
        <location>Cytoplasm</location>
        <location>Cytoskeleton</location>
    </subcellularLocation>
</comment>
<comment type="miscellaneous">
    <text>There are at least 13 actin genes in potato.</text>
</comment>
<comment type="similarity">
    <text evidence="2">Belongs to the actin family.</text>
</comment>
<accession>P30171</accession>
<dbReference type="EC" id="3.6.4.-" evidence="1"/>
<dbReference type="EMBL" id="X55751">
    <property type="protein sequence ID" value="CAA39280.1"/>
    <property type="molecule type" value="Genomic_DNA"/>
</dbReference>
<dbReference type="PIR" id="S20098">
    <property type="entry name" value="S20098"/>
</dbReference>
<dbReference type="SMR" id="P30171"/>
<dbReference type="FunCoup" id="P30171">
    <property type="interactions" value="1466"/>
</dbReference>
<dbReference type="STRING" id="4113.P30171"/>
<dbReference type="PaxDb" id="4113-PGSC0003DMT400071331"/>
<dbReference type="ProMEX" id="P30171"/>
<dbReference type="eggNOG" id="KOG0676">
    <property type="taxonomic scope" value="Eukaryota"/>
</dbReference>
<dbReference type="InParanoid" id="P30171"/>
<dbReference type="Proteomes" id="UP000011115">
    <property type="component" value="Unassembled WGS sequence"/>
</dbReference>
<dbReference type="ExpressionAtlas" id="P30171">
    <property type="expression patterns" value="baseline and differential"/>
</dbReference>
<dbReference type="GO" id="GO:0015629">
    <property type="term" value="C:actin cytoskeleton"/>
    <property type="evidence" value="ECO:0000318"/>
    <property type="project" value="GO_Central"/>
</dbReference>
<dbReference type="GO" id="GO:0005737">
    <property type="term" value="C:cytoplasm"/>
    <property type="evidence" value="ECO:0007669"/>
    <property type="project" value="UniProtKB-KW"/>
</dbReference>
<dbReference type="GO" id="GO:0005524">
    <property type="term" value="F:ATP binding"/>
    <property type="evidence" value="ECO:0007669"/>
    <property type="project" value="UniProtKB-KW"/>
</dbReference>
<dbReference type="GO" id="GO:0016787">
    <property type="term" value="F:hydrolase activity"/>
    <property type="evidence" value="ECO:0007669"/>
    <property type="project" value="UniProtKB-KW"/>
</dbReference>
<dbReference type="CDD" id="cd10224">
    <property type="entry name" value="ASKHA_NBD_actin"/>
    <property type="match status" value="1"/>
</dbReference>
<dbReference type="FunFam" id="3.30.420.40:FF:000291">
    <property type="entry name" value="Actin, alpha skeletal muscle"/>
    <property type="match status" value="1"/>
</dbReference>
<dbReference type="FunFam" id="3.90.640.10:FF:000001">
    <property type="entry name" value="Actin, muscle"/>
    <property type="match status" value="1"/>
</dbReference>
<dbReference type="FunFam" id="3.30.420.40:FF:000404">
    <property type="entry name" value="Major actin"/>
    <property type="match status" value="1"/>
</dbReference>
<dbReference type="FunFam" id="3.30.420.40:FF:000058">
    <property type="entry name" value="Putative actin-related protein 5"/>
    <property type="match status" value="1"/>
</dbReference>
<dbReference type="Gene3D" id="3.30.420.40">
    <property type="match status" value="2"/>
</dbReference>
<dbReference type="Gene3D" id="3.90.640.10">
    <property type="entry name" value="Actin, Chain A, domain 4"/>
    <property type="match status" value="1"/>
</dbReference>
<dbReference type="InterPro" id="IPR004000">
    <property type="entry name" value="Actin"/>
</dbReference>
<dbReference type="InterPro" id="IPR020902">
    <property type="entry name" value="Actin/actin-like_CS"/>
</dbReference>
<dbReference type="InterPro" id="IPR004001">
    <property type="entry name" value="Actin_CS"/>
</dbReference>
<dbReference type="InterPro" id="IPR043129">
    <property type="entry name" value="ATPase_NBD"/>
</dbReference>
<dbReference type="PANTHER" id="PTHR11937">
    <property type="entry name" value="ACTIN"/>
    <property type="match status" value="1"/>
</dbReference>
<dbReference type="Pfam" id="PF00022">
    <property type="entry name" value="Actin"/>
    <property type="match status" value="1"/>
</dbReference>
<dbReference type="PRINTS" id="PR00190">
    <property type="entry name" value="ACTIN"/>
</dbReference>
<dbReference type="SMART" id="SM00268">
    <property type="entry name" value="ACTIN"/>
    <property type="match status" value="1"/>
</dbReference>
<dbReference type="SUPFAM" id="SSF53067">
    <property type="entry name" value="Actin-like ATPase domain"/>
    <property type="match status" value="2"/>
</dbReference>
<dbReference type="PROSITE" id="PS00406">
    <property type="entry name" value="ACTINS_1"/>
    <property type="match status" value="1"/>
</dbReference>
<dbReference type="PROSITE" id="PS00432">
    <property type="entry name" value="ACTINS_2"/>
    <property type="match status" value="1"/>
</dbReference>
<dbReference type="PROSITE" id="PS01132">
    <property type="entry name" value="ACTINS_ACT_LIKE"/>
    <property type="match status" value="1"/>
</dbReference>
<reference key="1">
    <citation type="journal article" date="1990" name="J. Mol. Evol.">
        <title>Independent gene evolution in the potato actin gene family demonstrated by phylogenetic procedures for resolving gene conversions and the phylogeny of angiosperm actin genes.</title>
        <authorList>
            <person name="Drouin G."/>
            <person name="Dover G.A."/>
        </authorList>
    </citation>
    <scope>NUCLEOTIDE SEQUENCE [GENOMIC DNA]</scope>
    <source>
        <strain>cv. Maris Piper</strain>
        <tissue>Leaf</tissue>
    </source>
</reference>
<sequence length="377" mass="41643">MADGEDIQPLVCDNGTGMVKAGFAGDDAPRAVFPSIVGRPRHSGVMVGMGQKDAYVGDEAQSKRGILTLKYPIEHGIVSNWDDMEKIWHHTFYNELRVAPEEHPVLLTEAPLNPKANREKMTQIMFETFNTPAMYVAIQAVLSLYASGRTTGIVLDSGDGVSHTVPIYEGYALPHAILRLDLAGRDLTDSLMKILTERGYSFTTSAEREIVRDVKEKLAYIALDYEQELETSKTSSSVEKSYELPDGQVITIGAERFRCPEVLFQPSMIGMEAAGIHETTYNSIMKCDVDIRKDLYGNIVLSGGTTMFPGIADRMSKEITALAPSSMKIKVVAPPERKYSVWIGGSILASLSTFQQMWIAKAEYDESGPSIVHRKCF</sequence>
<feature type="chain" id="PRO_0000089018" description="Actin-97">
    <location>
        <begin position="1"/>
        <end position="377"/>
    </location>
</feature>
<evidence type="ECO:0000250" key="1">
    <source>
        <dbReference type="UniProtKB" id="P68137"/>
    </source>
</evidence>
<evidence type="ECO:0000305" key="2"/>
<name>ACT11_SOLTU</name>
<organism>
    <name type="scientific">Solanum tuberosum</name>
    <name type="common">Potato</name>
    <dbReference type="NCBI Taxonomy" id="4113"/>
    <lineage>
        <taxon>Eukaryota</taxon>
        <taxon>Viridiplantae</taxon>
        <taxon>Streptophyta</taxon>
        <taxon>Embryophyta</taxon>
        <taxon>Tracheophyta</taxon>
        <taxon>Spermatophyta</taxon>
        <taxon>Magnoliopsida</taxon>
        <taxon>eudicotyledons</taxon>
        <taxon>Gunneridae</taxon>
        <taxon>Pentapetalae</taxon>
        <taxon>asterids</taxon>
        <taxon>lamiids</taxon>
        <taxon>Solanales</taxon>
        <taxon>Solanaceae</taxon>
        <taxon>Solanoideae</taxon>
        <taxon>Solaneae</taxon>
        <taxon>Solanum</taxon>
    </lineage>
</organism>
<proteinExistence type="inferred from homology"/>
<gene>
    <name type="primary">AC97</name>
</gene>